<organism>
    <name type="scientific">Deinococcus deserti (strain DSM 17065 / CIP 109153 / LMG 22923 / VCD115)</name>
    <dbReference type="NCBI Taxonomy" id="546414"/>
    <lineage>
        <taxon>Bacteria</taxon>
        <taxon>Thermotogati</taxon>
        <taxon>Deinococcota</taxon>
        <taxon>Deinococci</taxon>
        <taxon>Deinococcales</taxon>
        <taxon>Deinococcaceae</taxon>
        <taxon>Deinococcus</taxon>
    </lineage>
</organism>
<evidence type="ECO:0000255" key="1">
    <source>
        <dbReference type="HAMAP-Rule" id="MF_01518"/>
    </source>
</evidence>
<proteinExistence type="inferred from homology"/>
<sequence>MTQWAMTESLEDRRRLVRVARGLEEGDLLVRGARVAQPVTREILEADVLIADGRVAVLGGTGDGLQAARVVEARGAFLAPGFIDGHVHIESSLLTPAGFARAVLLRGTTGVVAEPHEVVNVLGPQGLEWMLEAGRRSGLRVWASAPSCAPASGFEAGGARVGTAEVRQMLGQPGVLGLAEMMNYPGVLGGDEEVWAVIQAGRATGRRLDGHAAGVRGRDLQAYAAAGLHSDHEATTPEEARERLRAGLWLMVREGSAARNLQALLPVLRERPRRAMLVSDDVSVDELLELGHLDRLLRACVAGGLDPLDALALVTCNPAEYWGLHDVGLIAPGHLADFVLLRDLQSFEVLETFVGGAEAQPGELTPPLSGGGVHLGQGWDAATFEVPPGWPVLGIHAEQITTSREPEGSGDARLIVADRYGRGEWSACWTAGSGLTGGTLGISVLHDAHHAAFLGGSDTDVRMAGRALEALGGGLVVVSDGEVRASLPLPFAGLMTGEAPQEAAAGLARVTAATRALGCTLPYPVTTLSFLGLTVIPSLKLTPRGLLDVEAWQLVPSR</sequence>
<keyword id="KW-0378">Hydrolase</keyword>
<keyword id="KW-0464">Manganese</keyword>
<keyword id="KW-1185">Reference proteome</keyword>
<gene>
    <name evidence="1" type="primary">ade</name>
    <name type="ordered locus">Deide_04190</name>
</gene>
<dbReference type="EC" id="3.5.4.2" evidence="1"/>
<dbReference type="EMBL" id="CP001114">
    <property type="protein sequence ID" value="ACO45246.1"/>
    <property type="molecule type" value="Genomic_DNA"/>
</dbReference>
<dbReference type="RefSeq" id="WP_012692369.1">
    <property type="nucleotide sequence ID" value="NC_012526.1"/>
</dbReference>
<dbReference type="SMR" id="C1CZZ4"/>
<dbReference type="STRING" id="546414.Deide_04190"/>
<dbReference type="PaxDb" id="546414-Deide_04190"/>
<dbReference type="KEGG" id="ddr:Deide_04190"/>
<dbReference type="eggNOG" id="COG1001">
    <property type="taxonomic scope" value="Bacteria"/>
</dbReference>
<dbReference type="HOGENOM" id="CLU_027935_0_0_0"/>
<dbReference type="OrthoDB" id="9775607at2"/>
<dbReference type="Proteomes" id="UP000002208">
    <property type="component" value="Chromosome"/>
</dbReference>
<dbReference type="GO" id="GO:0000034">
    <property type="term" value="F:adenine deaminase activity"/>
    <property type="evidence" value="ECO:0007669"/>
    <property type="project" value="UniProtKB-UniRule"/>
</dbReference>
<dbReference type="GO" id="GO:0006146">
    <property type="term" value="P:adenine catabolic process"/>
    <property type="evidence" value="ECO:0007669"/>
    <property type="project" value="InterPro"/>
</dbReference>
<dbReference type="Gene3D" id="3.20.20.140">
    <property type="entry name" value="Metal-dependent hydrolases"/>
    <property type="match status" value="1"/>
</dbReference>
<dbReference type="Gene3D" id="2.30.40.10">
    <property type="entry name" value="Urease, subunit C, domain 1"/>
    <property type="match status" value="1"/>
</dbReference>
<dbReference type="HAMAP" id="MF_01518">
    <property type="entry name" value="Adenine_deamin"/>
    <property type="match status" value="1"/>
</dbReference>
<dbReference type="InterPro" id="IPR006679">
    <property type="entry name" value="Adenine_deam"/>
</dbReference>
<dbReference type="InterPro" id="IPR026912">
    <property type="entry name" value="Adenine_deam_C"/>
</dbReference>
<dbReference type="InterPro" id="IPR006680">
    <property type="entry name" value="Amidohydro-rel"/>
</dbReference>
<dbReference type="InterPro" id="IPR011059">
    <property type="entry name" value="Metal-dep_hydrolase_composite"/>
</dbReference>
<dbReference type="InterPro" id="IPR032466">
    <property type="entry name" value="Metal_Hydrolase"/>
</dbReference>
<dbReference type="PANTHER" id="PTHR11113:SF2">
    <property type="entry name" value="ADENINE DEAMINASE"/>
    <property type="match status" value="1"/>
</dbReference>
<dbReference type="PANTHER" id="PTHR11113">
    <property type="entry name" value="N-ACETYLGLUCOSAMINE-6-PHOSPHATE DEACETYLASE"/>
    <property type="match status" value="1"/>
</dbReference>
<dbReference type="Pfam" id="PF13382">
    <property type="entry name" value="Adenine_deam_C"/>
    <property type="match status" value="1"/>
</dbReference>
<dbReference type="Pfam" id="PF01979">
    <property type="entry name" value="Amidohydro_1"/>
    <property type="match status" value="1"/>
</dbReference>
<dbReference type="SUPFAM" id="SSF51338">
    <property type="entry name" value="Composite domain of metallo-dependent hydrolases"/>
    <property type="match status" value="1"/>
</dbReference>
<dbReference type="SUPFAM" id="SSF51556">
    <property type="entry name" value="Metallo-dependent hydrolases"/>
    <property type="match status" value="1"/>
</dbReference>
<protein>
    <recommendedName>
        <fullName evidence="1">Adenine deaminase</fullName>
        <shortName evidence="1">Adenase</shortName>
        <shortName evidence="1">Adenine aminase</shortName>
        <ecNumber evidence="1">3.5.4.2</ecNumber>
    </recommendedName>
</protein>
<comment type="catalytic activity">
    <reaction evidence="1">
        <text>adenine + H2O + H(+) = hypoxanthine + NH4(+)</text>
        <dbReference type="Rhea" id="RHEA:23688"/>
        <dbReference type="ChEBI" id="CHEBI:15377"/>
        <dbReference type="ChEBI" id="CHEBI:15378"/>
        <dbReference type="ChEBI" id="CHEBI:16708"/>
        <dbReference type="ChEBI" id="CHEBI:17368"/>
        <dbReference type="ChEBI" id="CHEBI:28938"/>
        <dbReference type="EC" id="3.5.4.2"/>
    </reaction>
</comment>
<comment type="cofactor">
    <cofactor evidence="1">
        <name>Mn(2+)</name>
        <dbReference type="ChEBI" id="CHEBI:29035"/>
    </cofactor>
</comment>
<comment type="similarity">
    <text evidence="1">Belongs to the metallo-dependent hydrolases superfamily. Adenine deaminase family.</text>
</comment>
<reference key="1">
    <citation type="journal article" date="2009" name="PLoS Genet.">
        <title>Alliance of proteomics and genomics to unravel the specificities of Sahara bacterium Deinococcus deserti.</title>
        <authorList>
            <person name="de Groot A."/>
            <person name="Dulermo R."/>
            <person name="Ortet P."/>
            <person name="Blanchard L."/>
            <person name="Guerin P."/>
            <person name="Fernandez B."/>
            <person name="Vacherie B."/>
            <person name="Dossat C."/>
            <person name="Jolivet E."/>
            <person name="Siguier P."/>
            <person name="Chandler M."/>
            <person name="Barakat M."/>
            <person name="Dedieu A."/>
            <person name="Barbe V."/>
            <person name="Heulin T."/>
            <person name="Sommer S."/>
            <person name="Achouak W."/>
            <person name="Armengaud J."/>
        </authorList>
    </citation>
    <scope>NUCLEOTIDE SEQUENCE [LARGE SCALE GENOMIC DNA]</scope>
    <source>
        <strain>DSM 17065 / CIP 109153 / LMG 22923 / VCD115</strain>
    </source>
</reference>
<name>ADEC_DEIDV</name>
<feature type="chain" id="PRO_1000215359" description="Adenine deaminase">
    <location>
        <begin position="1"/>
        <end position="558"/>
    </location>
</feature>
<accession>C1CZZ4</accession>